<feature type="chain" id="PRO_0000271230" description="Pregnancy-associated glycoprotein 75">
    <location>
        <begin position="1"/>
        <end position="20" status="greater than"/>
    </location>
</feature>
<feature type="non-terminal residue">
    <location>
        <position position="20"/>
    </location>
</feature>
<protein>
    <recommendedName>
        <fullName>Pregnancy-associated glycoprotein 75</fullName>
        <shortName>PAG 75</shortName>
        <ecNumber>3.4.23.-</ecNumber>
    </recommendedName>
    <alternativeName>
        <fullName>Pregnancy-associated glycoprotein 60K</fullName>
    </alternativeName>
    <alternativeName>
        <fullName>Pregnancy-associated glycoprotein 63H</fullName>
    </alternativeName>
    <alternativeName>
        <fullName>Pregnancy-associated glycoprotein 69A</fullName>
    </alternativeName>
    <alternativeName>
        <fullName>Pregnancy-associated glycoprotein 76D</fullName>
    </alternativeName>
    <alternativeName>
        <fullName>Pregnancy-associated glycoprotein 76G</fullName>
    </alternativeName>
</protein>
<evidence type="ECO:0000250" key="1">
    <source>
        <dbReference type="UniProtKB" id="P84917"/>
    </source>
</evidence>
<evidence type="ECO:0000255" key="2"/>
<evidence type="ECO:0000269" key="3">
    <source>
    </source>
</evidence>
<evidence type="ECO:0000269" key="4">
    <source>
    </source>
</evidence>
<reference key="1">
    <citation type="journal article" date="2008" name="Res. Vet. Sci.">
        <title>Isolation of new pregnancy-associated glycoproteins from water buffalo (Bubalus bubalis) placenta by Vicia villosa affinity chromatography.</title>
        <authorList>
            <person name="Barbato O."/>
            <person name="Sousa N.M."/>
            <person name="Klisch K."/>
            <person name="Clerget E."/>
            <person name="Debenedetti A."/>
            <person name="Barile V.L."/>
            <person name="Malfatti A."/>
            <person name="Beckers J.F."/>
        </authorList>
    </citation>
    <scope>PROTEIN SEQUENCE</scope>
    <scope>SUBCELLULAR LOCATION</scope>
    <scope>TISSUE SPECIFICITY</scope>
    <scope>DEVELOPMENTAL STAGE</scope>
    <source>
        <tissue>Trophectoderm</tissue>
    </source>
</reference>
<reference key="2">
    <citation type="journal article" date="2013" name="BMC Vet. Res.">
        <title>Purification of pregnancy-associated glycoproteins from late-pregnancy Bubalus bubalis placentas and development of a radioimmunoassay for pregnancy diagnosis in water buffalo females.</title>
        <authorList>
            <person name="Barbato O."/>
            <person name="Melo de Sousa N."/>
            <person name="Barile V.L."/>
            <person name="Canali C."/>
            <person name="Beckers J.F."/>
        </authorList>
    </citation>
    <scope>PROTEIN SEQUENCE OF 1-10</scope>
    <scope>TISSUE SPECIFICITY</scope>
    <scope>DEVELOPMENTAL STAGE</scope>
    <source>
        <tissue>Fetal cotyledon</tissue>
    </source>
</reference>
<name>PAG75_BUBBU</name>
<proteinExistence type="evidence at protein level"/>
<sequence length="20" mass="2373">RGSXLTIHPLRNIRDFFYVG</sequence>
<organism>
    <name type="scientific">Bubalus bubalis</name>
    <name type="common">Domestic water buffalo</name>
    <dbReference type="NCBI Taxonomy" id="89462"/>
    <lineage>
        <taxon>Eukaryota</taxon>
        <taxon>Metazoa</taxon>
        <taxon>Chordata</taxon>
        <taxon>Craniata</taxon>
        <taxon>Vertebrata</taxon>
        <taxon>Euteleostomi</taxon>
        <taxon>Mammalia</taxon>
        <taxon>Eutheria</taxon>
        <taxon>Laurasiatheria</taxon>
        <taxon>Artiodactyla</taxon>
        <taxon>Ruminantia</taxon>
        <taxon>Pecora</taxon>
        <taxon>Bovidae</taxon>
        <taxon>Bovinae</taxon>
        <taxon>Bubalus</taxon>
    </lineage>
</organism>
<keyword id="KW-0064">Aspartyl protease</keyword>
<keyword id="KW-0903">Direct protein sequencing</keyword>
<keyword id="KW-0325">Glycoprotein</keyword>
<keyword id="KW-0378">Hydrolase</keyword>
<keyword id="KW-0645">Protease</keyword>
<keyword id="KW-0964">Secreted</keyword>
<dbReference type="EC" id="3.4.23.-"/>
<dbReference type="GO" id="GO:0005576">
    <property type="term" value="C:extracellular region"/>
    <property type="evidence" value="ECO:0007669"/>
    <property type="project" value="UniProtKB-SubCell"/>
</dbReference>
<dbReference type="GO" id="GO:0004190">
    <property type="term" value="F:aspartic-type endopeptidase activity"/>
    <property type="evidence" value="ECO:0007669"/>
    <property type="project" value="UniProtKB-KW"/>
</dbReference>
<dbReference type="GO" id="GO:0006508">
    <property type="term" value="P:proteolysis"/>
    <property type="evidence" value="ECO:0007669"/>
    <property type="project" value="UniProtKB-KW"/>
</dbReference>
<comment type="subcellular location">
    <subcellularLocation>
        <location evidence="3">Secreted</location>
    </subcellularLocation>
</comment>
<comment type="tissue specificity">
    <text evidence="3 4">Expressed in chorionic epithelium (trophectoderm).</text>
</comment>
<comment type="developmental stage">
    <text evidence="3 4">Expressed during month 5 of pregnancy.</text>
</comment>
<comment type="PTM">
    <text evidence="1">N-glycosylated.</text>
</comment>
<comment type="similarity">
    <text evidence="2">Belongs to the peptidase A1 family.</text>
</comment>
<accession>P85048</accession>
<accession>P86369</accession>
<accession>P86372</accession>
<accession>P86375</accession>
<accession>P86378</accession>
<accession>P86379</accession>